<accession>O70738</accession>
<dbReference type="EMBL" id="AB008394">
    <property type="protein sequence ID" value="BAA25130.1"/>
    <property type="molecule type" value="Genomic_DNA"/>
</dbReference>
<dbReference type="Proteomes" id="UP000008778">
    <property type="component" value="Genome"/>
</dbReference>
<dbReference type="InterPro" id="IPR013267">
    <property type="entry name" value="Hepatitis_TTV_Orf2a"/>
</dbReference>
<dbReference type="InterPro" id="IPR004118">
    <property type="entry name" value="HEV_TT_vir_Orf2/Gyrovir_Vp2_N"/>
</dbReference>
<dbReference type="Pfam" id="PF02957">
    <property type="entry name" value="TT_ORF2-like"/>
    <property type="match status" value="1"/>
</dbReference>
<dbReference type="Pfam" id="PF08197">
    <property type="entry name" value="TT_ORF2a"/>
    <property type="match status" value="1"/>
</dbReference>
<organism>
    <name type="scientific">Torque teno virus 1 (isolate TA278)</name>
    <dbReference type="NCBI Taxonomy" id="766182"/>
    <lineage>
        <taxon>Viruses</taxon>
        <taxon>Viruses incertae sedis</taxon>
        <taxon>Anelloviridae</taxon>
        <taxon>Alphatorquevirus</taxon>
        <taxon>Alphatorquevirus homin1</taxon>
    </lineage>
</organism>
<gene>
    <name type="ORF">ORF2</name>
</gene>
<organismHost>
    <name type="scientific">Homo sapiens</name>
    <name type="common">Human</name>
    <dbReference type="NCBI Taxonomy" id="9606"/>
</organismHost>
<feature type="chain" id="PRO_0000404279" description="Uncharacterized ORF2 protein">
    <location>
        <begin position="1"/>
        <end position="202"/>
    </location>
</feature>
<feature type="region of interest" description="Disordered" evidence="1">
    <location>
        <begin position="1"/>
        <end position="21"/>
    </location>
</feature>
<feature type="region of interest" description="Disordered" evidence="1">
    <location>
        <begin position="149"/>
        <end position="202"/>
    </location>
</feature>
<keyword id="KW-1185">Reference proteome</keyword>
<evidence type="ECO:0000256" key="1">
    <source>
        <dbReference type="SAM" id="MobiDB-lite"/>
    </source>
</evidence>
<proteinExistence type="predicted"/>
<reference key="1">
    <citation type="journal article" date="1998" name="Hepatol. Res.">
        <title>Molecular cloning and characterization of a novel DNA virus(TTV) associated with posttransfusion hepatitis of unknown etiology.</title>
        <authorList>
            <person name="Okamoto H."/>
            <person name="Nishizawa T."/>
            <person name="Kato N."/>
            <person name="Ukita M."/>
            <person name="Ikeda H."/>
            <person name="Iizuka H."/>
            <person name="Miyakawa Y."/>
            <person name="Mayumi M."/>
        </authorList>
    </citation>
    <scope>NUCLEOTIDE SEQUENCE [GENOMIC DNA]</scope>
</reference>
<sequence length="202" mass="21480">MAEFSTPVRSGEATEGDLRVPRAGAEGEFTHRSQGAIRARDWPGYGQGSEKSMFIGRHYRKKRALSLCAVRTTKKACKLLIVMWTPPRNDQHYLNWQWYSSILSSHAAMCGCPDAVAHFNHLASVLRAPQNPPPPGPQRNLPLRRLPALPAAPEAPGDRAPWPMAGGAEGEDGGAGGDADHGGAAGGPEDADLLDAVAAAET</sequence>
<protein>
    <recommendedName>
        <fullName>Uncharacterized ORF2 protein</fullName>
    </recommendedName>
</protein>
<name>ORF2_TTVA1</name>